<gene>
    <name evidence="7" type="primary">SRT1</name>
    <name evidence="7" type="ordered locus">YMR101C</name>
    <name type="ORF">YM6543.08C</name>
</gene>
<keyword id="KW-0551">Lipid droplet</keyword>
<keyword id="KW-0460">Magnesium</keyword>
<keyword id="KW-1185">Reference proteome</keyword>
<keyword id="KW-0808">Transferase</keyword>
<feature type="chain" id="PRO_0000123760" description="Dehydrodolichyl diphosphate synthase complex subunit SRT1">
    <location>
        <begin position="1"/>
        <end position="343"/>
    </location>
</feature>
<proteinExistence type="evidence at protein level"/>
<name>SRT1_YEAST</name>
<evidence type="ECO:0000250" key="1">
    <source>
        <dbReference type="UniProtKB" id="Q86SQ9"/>
    </source>
</evidence>
<evidence type="ECO:0000269" key="2">
    <source>
    </source>
</evidence>
<evidence type="ECO:0000269" key="3">
    <source>
    </source>
</evidence>
<evidence type="ECO:0000269" key="4">
    <source>
    </source>
</evidence>
<evidence type="ECO:0000303" key="5">
    <source>
    </source>
</evidence>
<evidence type="ECO:0000305" key="6"/>
<evidence type="ECO:0000312" key="7">
    <source>
        <dbReference type="SGD" id="S000004707"/>
    </source>
</evidence>
<organism>
    <name type="scientific">Saccharomyces cerevisiae (strain ATCC 204508 / S288c)</name>
    <name type="common">Baker's yeast</name>
    <dbReference type="NCBI Taxonomy" id="559292"/>
    <lineage>
        <taxon>Eukaryota</taxon>
        <taxon>Fungi</taxon>
        <taxon>Dikarya</taxon>
        <taxon>Ascomycota</taxon>
        <taxon>Saccharomycotina</taxon>
        <taxon>Saccharomycetes</taxon>
        <taxon>Saccharomycetales</taxon>
        <taxon>Saccharomycetaceae</taxon>
        <taxon>Saccharomyces</taxon>
    </lineage>
</organism>
<sequence>MKMPSIIQIQFVALKRLLVETKEQMCFAVKSIFQRVFAWVMSLSLFSWFYVNLQNILIKALRVGPVPEHVSFIMDGNRRYAKSRRLPVKKGHEAGGLTLLTLLYICKRLGVKCVSAYAFSIENFNRPKEEVDTLMNLFTVKLDEFAKRAKDYKDPLYGSKIRIVGDQSLLSPEMRKKIKKVEEITQDGDDFTLFICFPYTSRNDMLHTIRDSVEDHLENKSPRINIRKFTNKMYMGFHSNKCELLIRTSGHRRLSDYMLWQVHENATIEFSDTLWPNFSFFAMYLMILKWSFFSTIQKYNEKNHSLFEKIHESVPSIFKKKKTAMSLYNFPNPPISVSVTGDE</sequence>
<reference key="1">
    <citation type="journal article" date="1999" name="Mol. Cell. Biol.">
        <title>The yeast RER2 gene, identified by endoplasmic reticulum protein localization mutations, encodes cis-prenyltransferase, a key enzyme in dolichol synthesis.</title>
        <authorList>
            <person name="Sato M."/>
            <person name="Sato K."/>
            <person name="Nishikawa S."/>
            <person name="Hirata A."/>
            <person name="Kato J."/>
            <person name="Nakano A."/>
        </authorList>
    </citation>
    <scope>NUCLEOTIDE SEQUENCE [GENOMIC DNA]</scope>
    <scope>PRELIMINARY CHARACTERIZATION</scope>
</reference>
<reference key="2">
    <citation type="journal article" date="1997" name="Nature">
        <title>The nucleotide sequence of Saccharomyces cerevisiae chromosome XIII.</title>
        <authorList>
            <person name="Bowman S."/>
            <person name="Churcher C.M."/>
            <person name="Badcock K."/>
            <person name="Brown D."/>
            <person name="Chillingworth T."/>
            <person name="Connor R."/>
            <person name="Dedman K."/>
            <person name="Devlin K."/>
            <person name="Gentles S."/>
            <person name="Hamlin N."/>
            <person name="Hunt S."/>
            <person name="Jagels K."/>
            <person name="Lye G."/>
            <person name="Moule S."/>
            <person name="Odell C."/>
            <person name="Pearson D."/>
            <person name="Rajandream M.A."/>
            <person name="Rice P."/>
            <person name="Skelton J."/>
            <person name="Walsh S.V."/>
            <person name="Whitehead S."/>
            <person name="Barrell B.G."/>
        </authorList>
    </citation>
    <scope>NUCLEOTIDE SEQUENCE [LARGE SCALE GENOMIC DNA]</scope>
    <source>
        <strain>ATCC 204508 / S288c</strain>
    </source>
</reference>
<reference key="3">
    <citation type="journal article" date="2014" name="G3 (Bethesda)">
        <title>The reference genome sequence of Saccharomyces cerevisiae: Then and now.</title>
        <authorList>
            <person name="Engel S.R."/>
            <person name="Dietrich F.S."/>
            <person name="Fisk D.G."/>
            <person name="Binkley G."/>
            <person name="Balakrishnan R."/>
            <person name="Costanzo M.C."/>
            <person name="Dwight S.S."/>
            <person name="Hitz B.C."/>
            <person name="Karra K."/>
            <person name="Nash R.S."/>
            <person name="Weng S."/>
            <person name="Wong E.D."/>
            <person name="Lloyd P."/>
            <person name="Skrzypek M.S."/>
            <person name="Miyasato S.R."/>
            <person name="Simison M."/>
            <person name="Cherry J.M."/>
        </authorList>
    </citation>
    <scope>GENOME REANNOTATION</scope>
    <source>
        <strain>ATCC 204508 / S288c</strain>
    </source>
</reference>
<reference key="4">
    <citation type="journal article" date="2001" name="Genes Cells">
        <title>Yeast Saccharomyces cerevisiae has two cis-prenyltransferases with different properties and localizations. Implication for their distinct physiological roles in dolichol synthesis.</title>
        <authorList>
            <person name="Sato M."/>
            <person name="Fujisaki S."/>
            <person name="Sato K."/>
            <person name="Nishimura Y."/>
            <person name="Nakano A."/>
        </authorList>
    </citation>
    <scope>FUNCTION</scope>
    <scope>INDUCTION</scope>
    <scope>SUBCELLULAR LOCATION</scope>
</reference>
<reference key="5">
    <citation type="journal article" date="2007" name="Biopolymers">
        <title>Precise bacterial polyprenol length control fails in Saccharomyces cerevisiae.</title>
        <authorList>
            <person name="Poznanski J."/>
            <person name="Szkopinska A."/>
        </authorList>
    </citation>
    <scope>FUNCTION</scope>
</reference>
<reference key="6">
    <citation type="journal article" date="2014" name="Cell Metab.">
        <title>Mutation of Nogo-B receptor, a subunit of cis-prenyltransferase, causes a congenital disorder of glycosylation.</title>
        <authorList>
            <person name="Park E.J."/>
            <person name="Grabinska K.A."/>
            <person name="Guan Z."/>
            <person name="Stranecky V."/>
            <person name="Hartmannova H."/>
            <person name="Hodanova K."/>
            <person name="Baresova V."/>
            <person name="Sovova J."/>
            <person name="Jozsef L."/>
            <person name="Ondruskova N."/>
            <person name="Hansikova H."/>
            <person name="Honzik T."/>
            <person name="Zeman J."/>
            <person name="Hulkova H."/>
            <person name="Wen R."/>
            <person name="Kmoch S."/>
            <person name="Sessa W.C."/>
        </authorList>
    </citation>
    <scope>CATALYTIC ACTIVITY</scope>
    <scope>FUNCTION</scope>
    <scope>SUBUNIT</scope>
</reference>
<accession>Q03175</accession>
<accession>D6VZS4</accession>
<protein>
    <recommendedName>
        <fullName evidence="6">Dehydrodolichyl diphosphate synthase complex subunit SRT1</fullName>
        <ecNumber evidence="5">2.5.1.87</ecNumber>
    </recommendedName>
    <alternativeName>
        <fullName evidence="6">Ditrans,polycis-polyprenyl diphosphate synthase ((2E,6E)-farnesyl diphosphate specific)</fullName>
    </alternativeName>
</protein>
<dbReference type="EC" id="2.5.1.87" evidence="5"/>
<dbReference type="EMBL" id="AB013498">
    <property type="protein sequence ID" value="BAA36578.1"/>
    <property type="molecule type" value="Genomic_DNA"/>
</dbReference>
<dbReference type="EMBL" id="Z49807">
    <property type="protein sequence ID" value="CAA89902.1"/>
    <property type="molecule type" value="Genomic_DNA"/>
</dbReference>
<dbReference type="EMBL" id="BK006946">
    <property type="protein sequence ID" value="DAA09998.1"/>
    <property type="molecule type" value="Genomic_DNA"/>
</dbReference>
<dbReference type="PIR" id="S55087">
    <property type="entry name" value="S55087"/>
</dbReference>
<dbReference type="RefSeq" id="NP_013819.1">
    <property type="nucleotide sequence ID" value="NM_001182601.1"/>
</dbReference>
<dbReference type="SMR" id="Q03175"/>
<dbReference type="BioGRID" id="35277">
    <property type="interactions" value="66"/>
</dbReference>
<dbReference type="ComplexPortal" id="CPX-166">
    <property type="entry name" value="Dehydrodolichyl diphosphate synthase complex variant SRT1"/>
</dbReference>
<dbReference type="DIP" id="DIP-4439N"/>
<dbReference type="FunCoup" id="Q03175">
    <property type="interactions" value="66"/>
</dbReference>
<dbReference type="IntAct" id="Q03175">
    <property type="interactions" value="1"/>
</dbReference>
<dbReference type="STRING" id="4932.YMR101C"/>
<dbReference type="PaxDb" id="4932-YMR101C"/>
<dbReference type="PeptideAtlas" id="Q03175"/>
<dbReference type="EnsemblFungi" id="YMR101C_mRNA">
    <property type="protein sequence ID" value="YMR101C"/>
    <property type="gene ID" value="YMR101C"/>
</dbReference>
<dbReference type="GeneID" id="855127"/>
<dbReference type="KEGG" id="sce:YMR101C"/>
<dbReference type="AGR" id="SGD:S000004707"/>
<dbReference type="SGD" id="S000004707">
    <property type="gene designation" value="SRT1"/>
</dbReference>
<dbReference type="VEuPathDB" id="FungiDB:YMR101C"/>
<dbReference type="eggNOG" id="KOG1602">
    <property type="taxonomic scope" value="Eukaryota"/>
</dbReference>
<dbReference type="GeneTree" id="ENSGT00390000007879"/>
<dbReference type="HOGENOM" id="CLU_038505_0_0_1"/>
<dbReference type="InParanoid" id="Q03175"/>
<dbReference type="OMA" id="TKGQPDP"/>
<dbReference type="OrthoDB" id="4173905at2759"/>
<dbReference type="BioCyc" id="MetaCyc:YMR101C-MONOMER"/>
<dbReference type="BioCyc" id="YEAST:YMR101C-MONOMER"/>
<dbReference type="BRENDA" id="2.5.1.87">
    <property type="organism ID" value="984"/>
</dbReference>
<dbReference type="UniPathway" id="UPA00378"/>
<dbReference type="BioGRID-ORCS" id="855127">
    <property type="hits" value="3 hits in 10 CRISPR screens"/>
</dbReference>
<dbReference type="PRO" id="PR:Q03175"/>
<dbReference type="Proteomes" id="UP000002311">
    <property type="component" value="Chromosome XIII"/>
</dbReference>
<dbReference type="RNAct" id="Q03175">
    <property type="molecule type" value="protein"/>
</dbReference>
<dbReference type="GO" id="GO:1904423">
    <property type="term" value="C:dehydrodolichyl diphosphate synthase complex"/>
    <property type="evidence" value="ECO:0000314"/>
    <property type="project" value="ComplexPortal"/>
</dbReference>
<dbReference type="GO" id="GO:0005783">
    <property type="term" value="C:endoplasmic reticulum"/>
    <property type="evidence" value="ECO:0000318"/>
    <property type="project" value="GO_Central"/>
</dbReference>
<dbReference type="GO" id="GO:0005811">
    <property type="term" value="C:lipid droplet"/>
    <property type="evidence" value="ECO:0000314"/>
    <property type="project" value="SGD"/>
</dbReference>
<dbReference type="GO" id="GO:0016020">
    <property type="term" value="C:membrane"/>
    <property type="evidence" value="ECO:0000318"/>
    <property type="project" value="GO_Central"/>
</dbReference>
<dbReference type="GO" id="GO:0045547">
    <property type="term" value="F:ditrans,polycis-polyprenyl diphosphate synthase [(2E,6E)-farnesyl diphosphate specific] activity"/>
    <property type="evidence" value="ECO:0000314"/>
    <property type="project" value="SGD"/>
</dbReference>
<dbReference type="GO" id="GO:0004659">
    <property type="term" value="F:prenyltransferase activity"/>
    <property type="evidence" value="ECO:0000314"/>
    <property type="project" value="SGD"/>
</dbReference>
<dbReference type="GO" id="GO:0019408">
    <property type="term" value="P:dolichol biosynthetic process"/>
    <property type="evidence" value="ECO:0000314"/>
    <property type="project" value="SGD"/>
</dbReference>
<dbReference type="GO" id="GO:0006486">
    <property type="term" value="P:protein glycosylation"/>
    <property type="evidence" value="ECO:0000314"/>
    <property type="project" value="SGD"/>
</dbReference>
<dbReference type="CDD" id="cd00475">
    <property type="entry name" value="Cis_IPPS"/>
    <property type="match status" value="1"/>
</dbReference>
<dbReference type="FunFam" id="3.40.1180.10:FF:000005">
    <property type="entry name" value="Alkyl transferase"/>
    <property type="match status" value="1"/>
</dbReference>
<dbReference type="Gene3D" id="3.40.1180.10">
    <property type="entry name" value="Decaprenyl diphosphate synthase-like"/>
    <property type="match status" value="1"/>
</dbReference>
<dbReference type="InterPro" id="IPR001441">
    <property type="entry name" value="UPP_synth-like"/>
</dbReference>
<dbReference type="InterPro" id="IPR018520">
    <property type="entry name" value="UPP_synth-like_CS"/>
</dbReference>
<dbReference type="InterPro" id="IPR036424">
    <property type="entry name" value="UPP_synth-like_sf"/>
</dbReference>
<dbReference type="NCBIfam" id="TIGR00055">
    <property type="entry name" value="uppS"/>
    <property type="match status" value="1"/>
</dbReference>
<dbReference type="PANTHER" id="PTHR10291:SF2">
    <property type="entry name" value="DEHYDRODOLICHYL DIPHOSPHATE SYNTHASE COMPLEX SUBUNIT SRT1"/>
    <property type="match status" value="1"/>
</dbReference>
<dbReference type="PANTHER" id="PTHR10291">
    <property type="entry name" value="DEHYDRODOLICHYL DIPHOSPHATE SYNTHASE FAMILY MEMBER"/>
    <property type="match status" value="1"/>
</dbReference>
<dbReference type="Pfam" id="PF01255">
    <property type="entry name" value="Prenyltransf"/>
    <property type="match status" value="1"/>
</dbReference>
<dbReference type="SUPFAM" id="SSF64005">
    <property type="entry name" value="Undecaprenyl diphosphate synthase"/>
    <property type="match status" value="1"/>
</dbReference>
<dbReference type="PROSITE" id="PS01066">
    <property type="entry name" value="UPP_SYNTHASE"/>
    <property type="match status" value="1"/>
</dbReference>
<comment type="function">
    <text evidence="2 3 4">With NUS1, forms the dehydrodolichyl diphosphate synthase (DDS) complex, an essential component of the dolichol monophosphate (Dol-P) biosynthetic machinery. Adds multiple copies of isopentenyl pyrophosphate (IPP) to farnesyl pyrophosphate (FPP) to produce dehydrodolichyl diphosphate (Dedol-PP), a precursor of dolichol which is utilized as a sugar carrier in protein glycosylation in the endoplasmic reticulum (ER).</text>
</comment>
<comment type="catalytic activity">
    <reaction evidence="5">
        <text>n isopentenyl diphosphate + (2E,6E)-farnesyl diphosphate = a di-trans,poly-cis-polyprenyl diphosphate + n diphosphate</text>
        <dbReference type="Rhea" id="RHEA:53008"/>
        <dbReference type="Rhea" id="RHEA-COMP:19494"/>
        <dbReference type="ChEBI" id="CHEBI:33019"/>
        <dbReference type="ChEBI" id="CHEBI:128769"/>
        <dbReference type="ChEBI" id="CHEBI:136960"/>
        <dbReference type="ChEBI" id="CHEBI:175763"/>
        <dbReference type="EC" id="2.5.1.87"/>
    </reaction>
</comment>
<comment type="cofactor">
    <cofactor evidence="1">
        <name>Mg(2+)</name>
        <dbReference type="ChEBI" id="CHEBI:18420"/>
    </cofactor>
</comment>
<comment type="pathway">
    <text evidence="6">Protein modification; protein glycosylation.</text>
</comment>
<comment type="subunit">
    <text evidence="5">Forms an active dehydrodolichyl diphosphate synthase complex with NUS1.</text>
</comment>
<comment type="subcellular location">
    <subcellularLocation>
        <location evidence="2">Lipid droplet</location>
    </subcellularLocation>
</comment>
<comment type="induction">
    <text evidence="2">Expression is induced in the stationary phase.</text>
</comment>
<comment type="similarity">
    <text evidence="6">Belongs to the UPP synthase family.</text>
</comment>